<proteinExistence type="evidence at protein level"/>
<gene>
    <name type="ordered locus">At1g54220</name>
    <name type="ORF">F20D21.4</name>
</gene>
<name>ODP23_ARATH</name>
<evidence type="ECO:0000250" key="1"/>
<evidence type="ECO:0000255" key="2"/>
<evidence type="ECO:0000255" key="3">
    <source>
        <dbReference type="PROSITE-ProRule" id="PRU01066"/>
    </source>
</evidence>
<evidence type="ECO:0000255" key="4">
    <source>
        <dbReference type="PROSITE-ProRule" id="PRU01170"/>
    </source>
</evidence>
<evidence type="ECO:0000256" key="5">
    <source>
        <dbReference type="SAM" id="MobiDB-lite"/>
    </source>
</evidence>
<evidence type="ECO:0000269" key="6">
    <source>
    </source>
</evidence>
<evidence type="ECO:0000269" key="7">
    <source>
    </source>
</evidence>
<evidence type="ECO:0000269" key="8">
    <source>
    </source>
</evidence>
<evidence type="ECO:0000305" key="9"/>
<evidence type="ECO:0000305" key="10">
    <source>
    </source>
</evidence>
<protein>
    <recommendedName>
        <fullName>Dihydrolipoyllysine-residue acetyltransferase component 3 of pyruvate dehydrogenase complex, mitochondrial</fullName>
        <ecNumber>2.3.1.12</ecNumber>
    </recommendedName>
    <alternativeName>
        <fullName>Dihydrolipoamide S-acetyltransferase component 3 of pyruvate dehydrogenase complex</fullName>
    </alternativeName>
    <alternativeName>
        <fullName>Pyruvate dehydrogenase complex component E2 3</fullName>
        <shortName>PDC-E2 3</shortName>
        <shortName>PDCE2 3</shortName>
    </alternativeName>
</protein>
<feature type="transit peptide" description="Mitochondrion" evidence="8">
    <location>
        <begin position="1"/>
        <end position="102"/>
    </location>
</feature>
<feature type="chain" id="PRO_0000260027" description="Dihydrolipoyllysine-residue acetyltransferase component 3 of pyruvate dehydrogenase complex, mitochondrial">
    <location>
        <begin position="103"/>
        <end position="539"/>
    </location>
</feature>
<feature type="domain" description="Lipoyl-binding" evidence="3">
    <location>
        <begin position="111"/>
        <end position="187"/>
    </location>
</feature>
<feature type="domain" description="Peripheral subunit-binding (PSBD)" evidence="4">
    <location>
        <begin position="248"/>
        <end position="285"/>
    </location>
</feature>
<feature type="region of interest" description="Disordered" evidence="5">
    <location>
        <begin position="195"/>
        <end position="247"/>
    </location>
</feature>
<feature type="compositionally biased region" description="Low complexity" evidence="5">
    <location>
        <begin position="204"/>
        <end position="214"/>
    </location>
</feature>
<feature type="active site" evidence="2">
    <location>
        <position position="512"/>
    </location>
</feature>
<feature type="active site" evidence="2">
    <location>
        <position position="516"/>
    </location>
</feature>
<feature type="modified residue" description="N6-lipoyllysine" evidence="1 3">
    <location>
        <position position="152"/>
    </location>
</feature>
<feature type="sequence conflict" description="In Ref. 1; AAK53067." evidence="9" ref="1">
    <original>T</original>
    <variation>I</variation>
    <location>
        <position position="45"/>
    </location>
</feature>
<feature type="sequence conflict" description="In Ref. 1; AAK53067." evidence="9" ref="1">
    <original>I</original>
    <variation>T</variation>
    <location>
        <position position="267"/>
    </location>
</feature>
<feature type="sequence conflict" description="In Ref. 4; AAM97076." evidence="9" ref="4">
    <original>N</original>
    <variation>S</variation>
    <location>
        <position position="442"/>
    </location>
</feature>
<dbReference type="EC" id="2.3.1.12"/>
<dbReference type="EMBL" id="AY033001">
    <property type="protein sequence ID" value="AAK53067.1"/>
    <property type="molecule type" value="mRNA"/>
</dbReference>
<dbReference type="EMBL" id="AC005287">
    <property type="protein sequence ID" value="AAD25602.1"/>
    <property type="status" value="ALT_SEQ"/>
    <property type="molecule type" value="Genomic_DNA"/>
</dbReference>
<dbReference type="EMBL" id="CP002684">
    <property type="protein sequence ID" value="AEE33067.1"/>
    <property type="molecule type" value="Genomic_DNA"/>
</dbReference>
<dbReference type="EMBL" id="CP002684">
    <property type="protein sequence ID" value="AEE33068.1"/>
    <property type="molecule type" value="Genomic_DNA"/>
</dbReference>
<dbReference type="EMBL" id="AY136410">
    <property type="protein sequence ID" value="AAM97076.1"/>
    <property type="molecule type" value="mRNA"/>
</dbReference>
<dbReference type="EMBL" id="BT020419">
    <property type="protein sequence ID" value="AAV97810.1"/>
    <property type="molecule type" value="mRNA"/>
</dbReference>
<dbReference type="PIR" id="E96583">
    <property type="entry name" value="E96583"/>
</dbReference>
<dbReference type="RefSeq" id="NP_001031186.1">
    <property type="nucleotide sequence ID" value="NM_001036109.1"/>
</dbReference>
<dbReference type="RefSeq" id="NP_564654.1">
    <property type="nucleotide sequence ID" value="NM_104300.4"/>
</dbReference>
<dbReference type="SMR" id="Q5M729"/>
<dbReference type="BioGRID" id="27088">
    <property type="interactions" value="15"/>
</dbReference>
<dbReference type="FunCoup" id="Q5M729">
    <property type="interactions" value="3297"/>
</dbReference>
<dbReference type="STRING" id="3702.Q5M729"/>
<dbReference type="GlyGen" id="Q5M729">
    <property type="glycosylation" value="1 site"/>
</dbReference>
<dbReference type="iPTMnet" id="Q5M729"/>
<dbReference type="PaxDb" id="3702-AT1G54220.1"/>
<dbReference type="ProteomicsDB" id="250781"/>
<dbReference type="EnsemblPlants" id="AT1G54220.1">
    <property type="protein sequence ID" value="AT1G54220.1"/>
    <property type="gene ID" value="AT1G54220"/>
</dbReference>
<dbReference type="EnsemblPlants" id="AT1G54220.2">
    <property type="protein sequence ID" value="AT1G54220.2"/>
    <property type="gene ID" value="AT1G54220"/>
</dbReference>
<dbReference type="GeneID" id="841863"/>
<dbReference type="Gramene" id="AT1G54220.1">
    <property type="protein sequence ID" value="AT1G54220.1"/>
    <property type="gene ID" value="AT1G54220"/>
</dbReference>
<dbReference type="Gramene" id="AT1G54220.2">
    <property type="protein sequence ID" value="AT1G54220.2"/>
    <property type="gene ID" value="AT1G54220"/>
</dbReference>
<dbReference type="KEGG" id="ath:AT1G54220"/>
<dbReference type="Araport" id="AT1G54220"/>
<dbReference type="TAIR" id="AT1G54220">
    <property type="gene designation" value="MTE2-3"/>
</dbReference>
<dbReference type="eggNOG" id="KOG0557">
    <property type="taxonomic scope" value="Eukaryota"/>
</dbReference>
<dbReference type="HOGENOM" id="CLU_016733_10_2_1"/>
<dbReference type="InParanoid" id="Q5M729"/>
<dbReference type="OMA" id="VERMTKC"/>
<dbReference type="OrthoDB" id="537444at2759"/>
<dbReference type="PhylomeDB" id="Q5M729"/>
<dbReference type="BioCyc" id="ARA:AT1G54220-MONOMER"/>
<dbReference type="PRO" id="PR:Q5M729"/>
<dbReference type="Proteomes" id="UP000006548">
    <property type="component" value="Chromosome 1"/>
</dbReference>
<dbReference type="ExpressionAtlas" id="Q5M729">
    <property type="expression patterns" value="baseline and differential"/>
</dbReference>
<dbReference type="GO" id="GO:0005759">
    <property type="term" value="C:mitochondrial matrix"/>
    <property type="evidence" value="ECO:0007669"/>
    <property type="project" value="UniProtKB-SubCell"/>
</dbReference>
<dbReference type="GO" id="GO:0005739">
    <property type="term" value="C:mitochondrion"/>
    <property type="evidence" value="ECO:0000314"/>
    <property type="project" value="TAIR"/>
</dbReference>
<dbReference type="GO" id="GO:0005634">
    <property type="term" value="C:nucleus"/>
    <property type="evidence" value="ECO:0007005"/>
    <property type="project" value="TAIR"/>
</dbReference>
<dbReference type="GO" id="GO:0045254">
    <property type="term" value="C:pyruvate dehydrogenase complex"/>
    <property type="evidence" value="ECO:0007669"/>
    <property type="project" value="InterPro"/>
</dbReference>
<dbReference type="GO" id="GO:0004742">
    <property type="term" value="F:dihydrolipoyllysine-residue acetyltransferase activity"/>
    <property type="evidence" value="ECO:0007669"/>
    <property type="project" value="UniProtKB-EC"/>
</dbReference>
<dbReference type="GO" id="GO:0006086">
    <property type="term" value="P:pyruvate decarboxylation to acetyl-CoA"/>
    <property type="evidence" value="ECO:0007669"/>
    <property type="project" value="InterPro"/>
</dbReference>
<dbReference type="CDD" id="cd06849">
    <property type="entry name" value="lipoyl_domain"/>
    <property type="match status" value="1"/>
</dbReference>
<dbReference type="FunFam" id="2.40.50.100:FF:000010">
    <property type="entry name" value="Acetyltransferase component of pyruvate dehydrogenase complex"/>
    <property type="match status" value="1"/>
</dbReference>
<dbReference type="FunFam" id="3.30.559.10:FF:000003">
    <property type="entry name" value="Acetyltransferase component of pyruvate dehydrogenase complex"/>
    <property type="match status" value="1"/>
</dbReference>
<dbReference type="Gene3D" id="2.40.50.100">
    <property type="match status" value="1"/>
</dbReference>
<dbReference type="Gene3D" id="3.30.559.10">
    <property type="entry name" value="Chloramphenicol acetyltransferase-like domain"/>
    <property type="match status" value="1"/>
</dbReference>
<dbReference type="Gene3D" id="4.10.320.10">
    <property type="entry name" value="E3-binding domain"/>
    <property type="match status" value="1"/>
</dbReference>
<dbReference type="InterPro" id="IPR003016">
    <property type="entry name" value="2-oxoA_DH_lipoyl-BS"/>
</dbReference>
<dbReference type="InterPro" id="IPR001078">
    <property type="entry name" value="2-oxoacid_DH_actylTfrase"/>
</dbReference>
<dbReference type="InterPro" id="IPR000089">
    <property type="entry name" value="Biotin_lipoyl"/>
</dbReference>
<dbReference type="InterPro" id="IPR023213">
    <property type="entry name" value="CAT-like_dom_sf"/>
</dbReference>
<dbReference type="InterPro" id="IPR045257">
    <property type="entry name" value="E2/Pdx1"/>
</dbReference>
<dbReference type="InterPro" id="IPR036625">
    <property type="entry name" value="E3-bd_dom_sf"/>
</dbReference>
<dbReference type="InterPro" id="IPR006257">
    <property type="entry name" value="LAT1"/>
</dbReference>
<dbReference type="InterPro" id="IPR004167">
    <property type="entry name" value="PSBD"/>
</dbReference>
<dbReference type="InterPro" id="IPR011053">
    <property type="entry name" value="Single_hybrid_motif"/>
</dbReference>
<dbReference type="NCBIfam" id="TIGR01349">
    <property type="entry name" value="PDHac_trf_mito"/>
    <property type="match status" value="1"/>
</dbReference>
<dbReference type="PANTHER" id="PTHR23151">
    <property type="entry name" value="DIHYDROLIPOAMIDE ACETYL/SUCCINYL-TRANSFERASE-RELATED"/>
    <property type="match status" value="1"/>
</dbReference>
<dbReference type="PANTHER" id="PTHR23151:SF90">
    <property type="entry name" value="DIHYDROLIPOYLLYSINE-RESIDUE ACETYLTRANSFERASE COMPONENT OF PYRUVATE DEHYDROGENASE COMPLEX, MITOCHONDRIAL-RELATED"/>
    <property type="match status" value="1"/>
</dbReference>
<dbReference type="Pfam" id="PF00198">
    <property type="entry name" value="2-oxoacid_dh"/>
    <property type="match status" value="1"/>
</dbReference>
<dbReference type="Pfam" id="PF00364">
    <property type="entry name" value="Biotin_lipoyl"/>
    <property type="match status" value="1"/>
</dbReference>
<dbReference type="Pfam" id="PF02817">
    <property type="entry name" value="E3_binding"/>
    <property type="match status" value="1"/>
</dbReference>
<dbReference type="SUPFAM" id="SSF52777">
    <property type="entry name" value="CoA-dependent acyltransferases"/>
    <property type="match status" value="1"/>
</dbReference>
<dbReference type="SUPFAM" id="SSF47005">
    <property type="entry name" value="Peripheral subunit-binding domain of 2-oxo acid dehydrogenase complex"/>
    <property type="match status" value="1"/>
</dbReference>
<dbReference type="SUPFAM" id="SSF51230">
    <property type="entry name" value="Single hybrid motif"/>
    <property type="match status" value="1"/>
</dbReference>
<dbReference type="PROSITE" id="PS50968">
    <property type="entry name" value="BIOTINYL_LIPOYL"/>
    <property type="match status" value="1"/>
</dbReference>
<dbReference type="PROSITE" id="PS00189">
    <property type="entry name" value="LIPOYL"/>
    <property type="match status" value="1"/>
</dbReference>
<dbReference type="PROSITE" id="PS51826">
    <property type="entry name" value="PSBD"/>
    <property type="match status" value="1"/>
</dbReference>
<organism>
    <name type="scientific">Arabidopsis thaliana</name>
    <name type="common">Mouse-ear cress</name>
    <dbReference type="NCBI Taxonomy" id="3702"/>
    <lineage>
        <taxon>Eukaryota</taxon>
        <taxon>Viridiplantae</taxon>
        <taxon>Streptophyta</taxon>
        <taxon>Embryophyta</taxon>
        <taxon>Tracheophyta</taxon>
        <taxon>Spermatophyta</taxon>
        <taxon>Magnoliopsida</taxon>
        <taxon>eudicotyledons</taxon>
        <taxon>Gunneridae</taxon>
        <taxon>Pentapetalae</taxon>
        <taxon>rosids</taxon>
        <taxon>malvids</taxon>
        <taxon>Brassicales</taxon>
        <taxon>Brassicaceae</taxon>
        <taxon>Camelineae</taxon>
        <taxon>Arabidopsis</taxon>
    </lineage>
</organism>
<accession>Q5M729</accession>
<accession>Q8L787</accession>
<accession>Q94IP5</accession>
<accession>Q9SLL0</accession>
<reference key="1">
    <citation type="submission" date="2001-04" db="EMBL/GenBank/DDBJ databases">
        <title>Mono-lipoyl E2 from pyruvate dehydrogenase complex from Arabidopsis.</title>
        <authorList>
            <person name="Broz A.K."/>
            <person name="Randall D.D."/>
            <person name="Miernyk J.A."/>
            <person name="Mooney B.P."/>
        </authorList>
    </citation>
    <scope>NUCLEOTIDE SEQUENCE [MRNA]</scope>
</reference>
<reference key="2">
    <citation type="journal article" date="2000" name="Nature">
        <title>Sequence and analysis of chromosome 1 of the plant Arabidopsis thaliana.</title>
        <authorList>
            <person name="Theologis A."/>
            <person name="Ecker J.R."/>
            <person name="Palm C.J."/>
            <person name="Federspiel N.A."/>
            <person name="Kaul S."/>
            <person name="White O."/>
            <person name="Alonso J."/>
            <person name="Altafi H."/>
            <person name="Araujo R."/>
            <person name="Bowman C.L."/>
            <person name="Brooks S.Y."/>
            <person name="Buehler E."/>
            <person name="Chan A."/>
            <person name="Chao Q."/>
            <person name="Chen H."/>
            <person name="Cheuk R.F."/>
            <person name="Chin C.W."/>
            <person name="Chung M.K."/>
            <person name="Conn L."/>
            <person name="Conway A.B."/>
            <person name="Conway A.R."/>
            <person name="Creasy T.H."/>
            <person name="Dewar K."/>
            <person name="Dunn P."/>
            <person name="Etgu P."/>
            <person name="Feldblyum T.V."/>
            <person name="Feng J.-D."/>
            <person name="Fong B."/>
            <person name="Fujii C.Y."/>
            <person name="Gill J.E."/>
            <person name="Goldsmith A.D."/>
            <person name="Haas B."/>
            <person name="Hansen N.F."/>
            <person name="Hughes B."/>
            <person name="Huizar L."/>
            <person name="Hunter J.L."/>
            <person name="Jenkins J."/>
            <person name="Johnson-Hopson C."/>
            <person name="Khan S."/>
            <person name="Khaykin E."/>
            <person name="Kim C.J."/>
            <person name="Koo H.L."/>
            <person name="Kremenetskaia I."/>
            <person name="Kurtz D.B."/>
            <person name="Kwan A."/>
            <person name="Lam B."/>
            <person name="Langin-Hooper S."/>
            <person name="Lee A."/>
            <person name="Lee J.M."/>
            <person name="Lenz C.A."/>
            <person name="Li J.H."/>
            <person name="Li Y.-P."/>
            <person name="Lin X."/>
            <person name="Liu S.X."/>
            <person name="Liu Z.A."/>
            <person name="Luros J.S."/>
            <person name="Maiti R."/>
            <person name="Marziali A."/>
            <person name="Militscher J."/>
            <person name="Miranda M."/>
            <person name="Nguyen M."/>
            <person name="Nierman W.C."/>
            <person name="Osborne B.I."/>
            <person name="Pai G."/>
            <person name="Peterson J."/>
            <person name="Pham P.K."/>
            <person name="Rizzo M."/>
            <person name="Rooney T."/>
            <person name="Rowley D."/>
            <person name="Sakano H."/>
            <person name="Salzberg S.L."/>
            <person name="Schwartz J.R."/>
            <person name="Shinn P."/>
            <person name="Southwick A.M."/>
            <person name="Sun H."/>
            <person name="Tallon L.J."/>
            <person name="Tambunga G."/>
            <person name="Toriumi M.J."/>
            <person name="Town C.D."/>
            <person name="Utterback T."/>
            <person name="Van Aken S."/>
            <person name="Vaysberg M."/>
            <person name="Vysotskaia V.S."/>
            <person name="Walker M."/>
            <person name="Wu D."/>
            <person name="Yu G."/>
            <person name="Fraser C.M."/>
            <person name="Venter J.C."/>
            <person name="Davis R.W."/>
        </authorList>
    </citation>
    <scope>NUCLEOTIDE SEQUENCE [LARGE SCALE GENOMIC DNA]</scope>
    <source>
        <strain>cv. Columbia</strain>
    </source>
</reference>
<reference key="3">
    <citation type="journal article" date="2017" name="Plant J.">
        <title>Araport11: a complete reannotation of the Arabidopsis thaliana reference genome.</title>
        <authorList>
            <person name="Cheng C.Y."/>
            <person name="Krishnakumar V."/>
            <person name="Chan A.P."/>
            <person name="Thibaud-Nissen F."/>
            <person name="Schobel S."/>
            <person name="Town C.D."/>
        </authorList>
    </citation>
    <scope>GENOME REANNOTATION</scope>
    <source>
        <strain>cv. Columbia</strain>
    </source>
</reference>
<reference key="4">
    <citation type="journal article" date="2003" name="Science">
        <title>Empirical analysis of transcriptional activity in the Arabidopsis genome.</title>
        <authorList>
            <person name="Yamada K."/>
            <person name="Lim J."/>
            <person name="Dale J.M."/>
            <person name="Chen H."/>
            <person name="Shinn P."/>
            <person name="Palm C.J."/>
            <person name="Southwick A.M."/>
            <person name="Wu H.C."/>
            <person name="Kim C.J."/>
            <person name="Nguyen M."/>
            <person name="Pham P.K."/>
            <person name="Cheuk R.F."/>
            <person name="Karlin-Newmann G."/>
            <person name="Liu S.X."/>
            <person name="Lam B."/>
            <person name="Sakano H."/>
            <person name="Wu T."/>
            <person name="Yu G."/>
            <person name="Miranda M."/>
            <person name="Quach H.L."/>
            <person name="Tripp M."/>
            <person name="Chang C.H."/>
            <person name="Lee J.M."/>
            <person name="Toriumi M.J."/>
            <person name="Chan M.M."/>
            <person name="Tang C.C."/>
            <person name="Onodera C.S."/>
            <person name="Deng J.M."/>
            <person name="Akiyama K."/>
            <person name="Ansari Y."/>
            <person name="Arakawa T."/>
            <person name="Banh J."/>
            <person name="Banno F."/>
            <person name="Bowser L."/>
            <person name="Brooks S.Y."/>
            <person name="Carninci P."/>
            <person name="Chao Q."/>
            <person name="Choy N."/>
            <person name="Enju A."/>
            <person name="Goldsmith A.D."/>
            <person name="Gurjal M."/>
            <person name="Hansen N.F."/>
            <person name="Hayashizaki Y."/>
            <person name="Johnson-Hopson C."/>
            <person name="Hsuan V.W."/>
            <person name="Iida K."/>
            <person name="Karnes M."/>
            <person name="Khan S."/>
            <person name="Koesema E."/>
            <person name="Ishida J."/>
            <person name="Jiang P.X."/>
            <person name="Jones T."/>
            <person name="Kawai J."/>
            <person name="Kamiya A."/>
            <person name="Meyers C."/>
            <person name="Nakajima M."/>
            <person name="Narusaka M."/>
            <person name="Seki M."/>
            <person name="Sakurai T."/>
            <person name="Satou M."/>
            <person name="Tamse R."/>
            <person name="Vaysberg M."/>
            <person name="Wallender E.K."/>
            <person name="Wong C."/>
            <person name="Yamamura Y."/>
            <person name="Yuan S."/>
            <person name="Shinozaki K."/>
            <person name="Davis R.W."/>
            <person name="Theologis A."/>
            <person name="Ecker J.R."/>
        </authorList>
    </citation>
    <scope>NUCLEOTIDE SEQUENCE [LARGE SCALE MRNA]</scope>
    <source>
        <strain>cv. Columbia</strain>
    </source>
</reference>
<reference key="5">
    <citation type="submission" date="2004-12" db="EMBL/GenBank/DDBJ databases">
        <title>Arabidopsis ORF clones.</title>
        <authorList>
            <person name="Shinn P."/>
            <person name="Chen H."/>
            <person name="Cheuk R.F."/>
            <person name="Kim C.J."/>
            <person name="Ecker J.R."/>
        </authorList>
    </citation>
    <scope>NUCLEOTIDE SEQUENCE [LARGE SCALE MRNA]</scope>
    <source>
        <strain>cv. Columbia</strain>
    </source>
</reference>
<reference key="6">
    <citation type="journal article" date="2004" name="Plant Cell">
        <title>Experimental analysis of the Arabidopsis mitochondrial proteome highlights signaling and regulatory components, provides assessment of targeting prediction programs, and indicates plant-specific mitochondrial proteins.</title>
        <authorList>
            <person name="Heazlewood J.L."/>
            <person name="Tonti-Filippini J.S."/>
            <person name="Gout A.M."/>
            <person name="Day D.A."/>
            <person name="Whelan J."/>
            <person name="Millar A.H."/>
        </authorList>
    </citation>
    <scope>IDENTIFICATION BY MASS SPECTROMETRY</scope>
    <scope>SUBCELLULAR LOCATION [LARGE SCALE ANALYSIS]</scope>
    <source>
        <strain>cv. Landsberg erecta</strain>
    </source>
</reference>
<reference key="7">
    <citation type="journal article" date="2004" name="Plant Physiol.">
        <title>Lipoic acid-dependent oxidative catabolism of alpha-keto acids in mitochondria provides evidence for branched-chain amino acid catabolism in Arabidopsis.</title>
        <authorList>
            <person name="Taylor N.L."/>
            <person name="Heazlewood J.L."/>
            <person name="Day D.A."/>
            <person name="Millar A.H."/>
        </authorList>
    </citation>
    <scope>FUNCTION</scope>
</reference>
<reference key="8">
    <citation type="journal article" date="2015" name="J. Exp. Bot.">
        <title>Identification of cleavage sites and substrate proteins for two mitochondrial intermediate peptidases in Arabidopsis thaliana.</title>
        <authorList>
            <person name="Carrie C."/>
            <person name="Venne A.S."/>
            <person name="Zahedi R.P."/>
            <person name="Soll J."/>
        </authorList>
    </citation>
    <scope>IDENTIFICATION BY MASS SPECTROMETRY</scope>
    <scope>CLEAVAGE OF TRANSIT PEPTIDE AFTER PHE-102</scope>
</reference>
<sequence>MAYASRIINHSKKLKDVSTLLRRENAATIRYYSNTNRAPLNREDTFNSRLGYPPLERISICSTSTLPVSIIFSTTRSNLSSAMGRPIFGKEFSCLMQSARGFSSGSDLPPHQEIGMPSLSPTMTEGNIARWLKKEGDKVAPGEVLCEVETDKATVEMECMEEGYLAKIVKAEGSKEIQVGEVIAITVEDEEDIGKFKDYTPSSTADAAPTKAEPTPAPPKEEKVKQPSSPPEPKASKPSTPPTGDRVFASPLARKLAEDNNVPLSDIEGTGPEGRIVKADIDEYLASSGKGATAKPSKSTDSKAPALDYVDIPHSQIRKVTASRLAFSKQTIPHYYLTVDTCVDKLMALRSQLNSFKEASGGKRISVNDLVVKAAALALRKVPQCNSSWTDDYIRQFKNVNINVAVQTENGLYVPVVKDADRKGLSTIGEEVRLLAQKAKENSLKPEDYEGGTFTVSNLGGPFGIKQFCAVVNPPQAAILAVGSAEKRVVPGNGPDQFNFASYMPVTLSCDHRVVDGAIGAEWLKAFKGYIENPKSMLL</sequence>
<comment type="function">
    <text evidence="7">The pyruvate dehydrogenase complex catalyzes the overall conversion of pyruvate to acetyl-CoA and CO(2). It contains multiple copies of three enzymatic components: pyruvate dehydrogenase (E1), dihydrolipoamide acetyltransferase (E2) and lipoamide dehydrogenase (E3).</text>
</comment>
<comment type="catalytic activity">
    <reaction>
        <text>N(6)-[(R)-dihydrolipoyl]-L-lysyl-[protein] + acetyl-CoA = N(6)-[(R)-S(8)-acetyldihydrolipoyl]-L-lysyl-[protein] + CoA</text>
        <dbReference type="Rhea" id="RHEA:17017"/>
        <dbReference type="Rhea" id="RHEA-COMP:10475"/>
        <dbReference type="Rhea" id="RHEA-COMP:10478"/>
        <dbReference type="ChEBI" id="CHEBI:57287"/>
        <dbReference type="ChEBI" id="CHEBI:57288"/>
        <dbReference type="ChEBI" id="CHEBI:83100"/>
        <dbReference type="ChEBI" id="CHEBI:83111"/>
        <dbReference type="EC" id="2.3.1.12"/>
    </reaction>
</comment>
<comment type="cofactor">
    <cofactor>
        <name>(R)-lipoate</name>
        <dbReference type="ChEBI" id="CHEBI:83088"/>
    </cofactor>
    <text>Binds 1 lipoyl cofactor covalently.</text>
</comment>
<comment type="subcellular location">
    <subcellularLocation>
        <location evidence="6 10">Mitochondrion matrix</location>
    </subcellularLocation>
</comment>
<comment type="similarity">
    <text evidence="9">Belongs to the 2-oxoacid dehydrogenase family.</text>
</comment>
<comment type="sequence caution" evidence="9">
    <conflict type="erroneous gene model prediction">
        <sequence resource="EMBL-CDS" id="AAD25602"/>
    </conflict>
</comment>
<keyword id="KW-0012">Acyltransferase</keyword>
<keyword id="KW-0450">Lipoyl</keyword>
<keyword id="KW-0496">Mitochondrion</keyword>
<keyword id="KW-1185">Reference proteome</keyword>
<keyword id="KW-0808">Transferase</keyword>
<keyword id="KW-0809">Transit peptide</keyword>